<evidence type="ECO:0000256" key="1">
    <source>
        <dbReference type="SAM" id="MobiDB-lite"/>
    </source>
</evidence>
<evidence type="ECO:0000269" key="2">
    <source>
    </source>
</evidence>
<evidence type="ECO:0000269" key="3">
    <source>
    </source>
</evidence>
<evidence type="ECO:0000269" key="4">
    <source>
    </source>
</evidence>
<evidence type="ECO:0000305" key="5"/>
<dbReference type="EMBL" id="AY463615">
    <property type="protein sequence ID" value="AAR28017.1"/>
    <property type="molecule type" value="mRNA"/>
</dbReference>
<dbReference type="EMBL" id="AC022521">
    <property type="status" value="NOT_ANNOTATED_CDS"/>
    <property type="molecule type" value="Genomic_DNA"/>
</dbReference>
<dbReference type="EMBL" id="CP002684">
    <property type="protein sequence ID" value="AEE27457.1"/>
    <property type="molecule type" value="Genomic_DNA"/>
</dbReference>
<dbReference type="EMBL" id="BT010482">
    <property type="protein sequence ID" value="AAQ65105.1"/>
    <property type="molecule type" value="mRNA"/>
</dbReference>
<dbReference type="EMBL" id="AK175906">
    <property type="protein sequence ID" value="BAD43669.1"/>
    <property type="molecule type" value="mRNA"/>
</dbReference>
<dbReference type="EMBL" id="AK175966">
    <property type="protein sequence ID" value="BAD43729.1"/>
    <property type="molecule type" value="mRNA"/>
</dbReference>
<dbReference type="EMBL" id="AK176854">
    <property type="protein sequence ID" value="BAD44617.1"/>
    <property type="molecule type" value="mRNA"/>
</dbReference>
<dbReference type="EMBL" id="AK221393">
    <property type="protein sequence ID" value="BAD94327.1"/>
    <property type="molecule type" value="mRNA"/>
</dbReference>
<dbReference type="EMBL" id="AB493426">
    <property type="protein sequence ID" value="BAH30264.1"/>
    <property type="molecule type" value="mRNA"/>
</dbReference>
<dbReference type="RefSeq" id="NP_171768.2">
    <property type="nucleotide sequence ID" value="NM_100148.3"/>
</dbReference>
<dbReference type="SMR" id="Q6NQH4"/>
<dbReference type="BioGRID" id="23202">
    <property type="interactions" value="13"/>
</dbReference>
<dbReference type="FunCoup" id="Q6NQH4">
    <property type="interactions" value="2878"/>
</dbReference>
<dbReference type="IntAct" id="Q6NQH4">
    <property type="interactions" value="12"/>
</dbReference>
<dbReference type="STRING" id="3702.Q6NQH4"/>
<dbReference type="PaxDb" id="3702-AT1G02680.1"/>
<dbReference type="ProteomicsDB" id="233006"/>
<dbReference type="EnsemblPlants" id="AT1G02680.1">
    <property type="protein sequence ID" value="AT1G02680.1"/>
    <property type="gene ID" value="AT1G02680"/>
</dbReference>
<dbReference type="GeneID" id="837962"/>
<dbReference type="Gramene" id="AT1G02680.1">
    <property type="protein sequence ID" value="AT1G02680.1"/>
    <property type="gene ID" value="AT1G02680"/>
</dbReference>
<dbReference type="KEGG" id="ath:AT1G02680"/>
<dbReference type="Araport" id="AT1G02680"/>
<dbReference type="TAIR" id="AT1G02680">
    <property type="gene designation" value="TAF13"/>
</dbReference>
<dbReference type="eggNOG" id="KOG3901">
    <property type="taxonomic scope" value="Eukaryota"/>
</dbReference>
<dbReference type="HOGENOM" id="CLU_076665_2_0_1"/>
<dbReference type="InParanoid" id="Q6NQH4"/>
<dbReference type="OMA" id="CERAMNV"/>
<dbReference type="OrthoDB" id="10266074at2759"/>
<dbReference type="PhylomeDB" id="Q6NQH4"/>
<dbReference type="PRO" id="PR:Q6NQH4"/>
<dbReference type="Proteomes" id="UP000006548">
    <property type="component" value="Chromosome 1"/>
</dbReference>
<dbReference type="ExpressionAtlas" id="Q6NQH4">
    <property type="expression patterns" value="baseline and differential"/>
</dbReference>
<dbReference type="GO" id="GO:0005634">
    <property type="term" value="C:nucleus"/>
    <property type="evidence" value="ECO:0000314"/>
    <property type="project" value="TAIR"/>
</dbReference>
<dbReference type="GO" id="GO:0005886">
    <property type="term" value="C:plasma membrane"/>
    <property type="evidence" value="ECO:0007669"/>
    <property type="project" value="UniProtKB-SubCell"/>
</dbReference>
<dbReference type="GO" id="GO:0046982">
    <property type="term" value="F:protein heterodimerization activity"/>
    <property type="evidence" value="ECO:0007669"/>
    <property type="project" value="InterPro"/>
</dbReference>
<dbReference type="GO" id="GO:0009793">
    <property type="term" value="P:embryo development ending in seed dormancy"/>
    <property type="evidence" value="ECO:0000315"/>
    <property type="project" value="TAIR"/>
</dbReference>
<dbReference type="GO" id="GO:0009960">
    <property type="term" value="P:endosperm development"/>
    <property type="evidence" value="ECO:0000315"/>
    <property type="project" value="TAIR"/>
</dbReference>
<dbReference type="GO" id="GO:0048316">
    <property type="term" value="P:seed development"/>
    <property type="evidence" value="ECO:0000315"/>
    <property type="project" value="TAIR"/>
</dbReference>
<dbReference type="GO" id="GO:0006366">
    <property type="term" value="P:transcription by RNA polymerase II"/>
    <property type="evidence" value="ECO:0007669"/>
    <property type="project" value="InterPro"/>
</dbReference>
<dbReference type="CDD" id="cd07978">
    <property type="entry name" value="HFD_TAF13"/>
    <property type="match status" value="1"/>
</dbReference>
<dbReference type="FunFam" id="1.10.20.10:FF:000042">
    <property type="entry name" value="Transcription initiation factor TFIID subunit 13"/>
    <property type="match status" value="1"/>
</dbReference>
<dbReference type="Gene3D" id="1.10.20.10">
    <property type="entry name" value="Histone, subunit A"/>
    <property type="match status" value="1"/>
</dbReference>
<dbReference type="InterPro" id="IPR009072">
    <property type="entry name" value="Histone-fold"/>
</dbReference>
<dbReference type="InterPro" id="IPR003195">
    <property type="entry name" value="TFIID_TAF13"/>
</dbReference>
<dbReference type="PANTHER" id="PTHR11380:SF5">
    <property type="entry name" value="TRANSCRIPTION INITIATION FACTOR TFIID SUBUNIT 13"/>
    <property type="match status" value="1"/>
</dbReference>
<dbReference type="PANTHER" id="PTHR11380">
    <property type="entry name" value="TRANSCRIPTION INITIATION FACTOR TFIID/SUPT3-RELATED"/>
    <property type="match status" value="1"/>
</dbReference>
<dbReference type="Pfam" id="PF02269">
    <property type="entry name" value="TFIID-18kDa"/>
    <property type="match status" value="1"/>
</dbReference>
<dbReference type="SUPFAM" id="SSF47113">
    <property type="entry name" value="Histone-fold"/>
    <property type="match status" value="1"/>
</dbReference>
<proteinExistence type="evidence at protein level"/>
<organism>
    <name type="scientific">Arabidopsis thaliana</name>
    <name type="common">Mouse-ear cress</name>
    <dbReference type="NCBI Taxonomy" id="3702"/>
    <lineage>
        <taxon>Eukaryota</taxon>
        <taxon>Viridiplantae</taxon>
        <taxon>Streptophyta</taxon>
        <taxon>Embryophyta</taxon>
        <taxon>Tracheophyta</taxon>
        <taxon>Spermatophyta</taxon>
        <taxon>Magnoliopsida</taxon>
        <taxon>eudicotyledons</taxon>
        <taxon>Gunneridae</taxon>
        <taxon>Pentapetalae</taxon>
        <taxon>rosids</taxon>
        <taxon>malvids</taxon>
        <taxon>Brassicales</taxon>
        <taxon>Brassicaceae</taxon>
        <taxon>Camelineae</taxon>
        <taxon>Arabidopsis</taxon>
    </lineage>
</organism>
<name>TAF13_ARATH</name>
<comment type="function">
    <text evidence="4">TAFs are components of the transcription factor IID (TFIID) complex that is essential for mediating regulation of RNA polymerase transcription. May be involved in polycomb repressive complex 2 (PRC2) mediated repression.</text>
</comment>
<comment type="subunit">
    <text evidence="3 4">Component of the TFIID complex. TFIID is composed of TATA binding protein (TBP) and a number of TBP-associated factors (TAFs) whose MWs range from 14-217 kDa. Interacts with TAF4B, TAF8, TAF9, TAF10, TAF11, TAF12, TAF12B and TAF14. Interacts with the members of the polycomb repressive complex 2 (PRC2) MEA and EZA1.</text>
</comment>
<comment type="subcellular location">
    <subcellularLocation>
        <location evidence="4">Nucleus</location>
    </subcellularLocation>
    <subcellularLocation>
        <location evidence="4">Cell membrane</location>
    </subcellularLocation>
    <text>At the torpedo stage, localized both in the nucleus and at the plasma membrane.</text>
</comment>
<comment type="tissue specificity">
    <text evidence="2">Expressed in roots, leaves and inflorescences.</text>
</comment>
<comment type="developmental stage">
    <text evidence="4">Detected early after fertilization in the zygotic embryo and free endosperm nuclei. Expression continues in the embryo at the heart and torpedo stages, but is restricted to the chalazal nuclei in endosperm before cellularization. At maturity, expressed mainly in the embryo epidermis and in the vascular tissue.</text>
</comment>
<comment type="disruption phenotype">
    <text evidence="4">Embryo lethal when homozygote.</text>
</comment>
<comment type="similarity">
    <text evidence="5">Belongs to the TAF13 family.</text>
</comment>
<sequence>MSNTPAAAASSSSKSKAAGTSQPQEKRKTLFQKELQHMMYGFGDEQNPLPESVALVEDIVVEYVTDLTHKAQEIGSKRGRLLVDDFLYLIRKDLPKLNRCRELLAMQEELKQARKAFDVDEKELVD</sequence>
<gene>
    <name type="primary">TAF13</name>
    <name type="ordered locus">At1g02680</name>
</gene>
<reference key="1">
    <citation type="journal article" date="2004" name="Gene">
        <title>TBP-associated factors in Arabidopsis.</title>
        <authorList>
            <person name="Lago C."/>
            <person name="Clerici E."/>
            <person name="Mizzi L."/>
            <person name="Colombo L."/>
            <person name="Kater M.M."/>
        </authorList>
    </citation>
    <scope>NUCLEOTIDE SEQUENCE [MRNA]</scope>
    <scope>IDENTIFICATION</scope>
    <scope>NOMENCLATURE</scope>
    <scope>TISSUE SPECIFICITY</scope>
</reference>
<reference key="2">
    <citation type="journal article" date="2007" name="Plant Mol. Biol.">
        <title>Yeast two-hybrid map of Arabidopsis TFIID.</title>
        <authorList>
            <person name="Lawit S.J."/>
            <person name="O'Grady K."/>
            <person name="Gurley W.B."/>
            <person name="Czarnecka-Verner E."/>
        </authorList>
    </citation>
    <scope>NUCLEOTIDE SEQUENCE [MRNA]</scope>
    <scope>INTERACTION WITH TAF4B; TAF8; TAF9; TAF10; TAF11; TAF12; TAF12B AND TAF14</scope>
    <source>
        <strain>cv. Columbia</strain>
    </source>
</reference>
<reference key="3">
    <citation type="journal article" date="2000" name="Nature">
        <title>Sequence and analysis of chromosome 1 of the plant Arabidopsis thaliana.</title>
        <authorList>
            <person name="Theologis A."/>
            <person name="Ecker J.R."/>
            <person name="Palm C.J."/>
            <person name="Federspiel N.A."/>
            <person name="Kaul S."/>
            <person name="White O."/>
            <person name="Alonso J."/>
            <person name="Altafi H."/>
            <person name="Araujo R."/>
            <person name="Bowman C.L."/>
            <person name="Brooks S.Y."/>
            <person name="Buehler E."/>
            <person name="Chan A."/>
            <person name="Chao Q."/>
            <person name="Chen H."/>
            <person name="Cheuk R.F."/>
            <person name="Chin C.W."/>
            <person name="Chung M.K."/>
            <person name="Conn L."/>
            <person name="Conway A.B."/>
            <person name="Conway A.R."/>
            <person name="Creasy T.H."/>
            <person name="Dewar K."/>
            <person name="Dunn P."/>
            <person name="Etgu P."/>
            <person name="Feldblyum T.V."/>
            <person name="Feng J.-D."/>
            <person name="Fong B."/>
            <person name="Fujii C.Y."/>
            <person name="Gill J.E."/>
            <person name="Goldsmith A.D."/>
            <person name="Haas B."/>
            <person name="Hansen N.F."/>
            <person name="Hughes B."/>
            <person name="Huizar L."/>
            <person name="Hunter J.L."/>
            <person name="Jenkins J."/>
            <person name="Johnson-Hopson C."/>
            <person name="Khan S."/>
            <person name="Khaykin E."/>
            <person name="Kim C.J."/>
            <person name="Koo H.L."/>
            <person name="Kremenetskaia I."/>
            <person name="Kurtz D.B."/>
            <person name="Kwan A."/>
            <person name="Lam B."/>
            <person name="Langin-Hooper S."/>
            <person name="Lee A."/>
            <person name="Lee J.M."/>
            <person name="Lenz C.A."/>
            <person name="Li J.H."/>
            <person name="Li Y.-P."/>
            <person name="Lin X."/>
            <person name="Liu S.X."/>
            <person name="Liu Z.A."/>
            <person name="Luros J.S."/>
            <person name="Maiti R."/>
            <person name="Marziali A."/>
            <person name="Militscher J."/>
            <person name="Miranda M."/>
            <person name="Nguyen M."/>
            <person name="Nierman W.C."/>
            <person name="Osborne B.I."/>
            <person name="Pai G."/>
            <person name="Peterson J."/>
            <person name="Pham P.K."/>
            <person name="Rizzo M."/>
            <person name="Rooney T."/>
            <person name="Rowley D."/>
            <person name="Sakano H."/>
            <person name="Salzberg S.L."/>
            <person name="Schwartz J.R."/>
            <person name="Shinn P."/>
            <person name="Southwick A.M."/>
            <person name="Sun H."/>
            <person name="Tallon L.J."/>
            <person name="Tambunga G."/>
            <person name="Toriumi M.J."/>
            <person name="Town C.D."/>
            <person name="Utterback T."/>
            <person name="Van Aken S."/>
            <person name="Vaysberg M."/>
            <person name="Vysotskaia V.S."/>
            <person name="Walker M."/>
            <person name="Wu D."/>
            <person name="Yu G."/>
            <person name="Fraser C.M."/>
            <person name="Venter J.C."/>
            <person name="Davis R.W."/>
        </authorList>
    </citation>
    <scope>NUCLEOTIDE SEQUENCE [LARGE SCALE GENOMIC DNA]</scope>
    <source>
        <strain>cv. Columbia</strain>
    </source>
</reference>
<reference key="4">
    <citation type="journal article" date="2017" name="Plant J.">
        <title>Araport11: a complete reannotation of the Arabidopsis thaliana reference genome.</title>
        <authorList>
            <person name="Cheng C.Y."/>
            <person name="Krishnakumar V."/>
            <person name="Chan A.P."/>
            <person name="Thibaud-Nissen F."/>
            <person name="Schobel S."/>
            <person name="Town C.D."/>
        </authorList>
    </citation>
    <scope>GENOME REANNOTATION</scope>
    <source>
        <strain>cv. Columbia</strain>
    </source>
</reference>
<reference key="5">
    <citation type="journal article" date="2003" name="Science">
        <title>Empirical analysis of transcriptional activity in the Arabidopsis genome.</title>
        <authorList>
            <person name="Yamada K."/>
            <person name="Lim J."/>
            <person name="Dale J.M."/>
            <person name="Chen H."/>
            <person name="Shinn P."/>
            <person name="Palm C.J."/>
            <person name="Southwick A.M."/>
            <person name="Wu H.C."/>
            <person name="Kim C.J."/>
            <person name="Nguyen M."/>
            <person name="Pham P.K."/>
            <person name="Cheuk R.F."/>
            <person name="Karlin-Newmann G."/>
            <person name="Liu S.X."/>
            <person name="Lam B."/>
            <person name="Sakano H."/>
            <person name="Wu T."/>
            <person name="Yu G."/>
            <person name="Miranda M."/>
            <person name="Quach H.L."/>
            <person name="Tripp M."/>
            <person name="Chang C.H."/>
            <person name="Lee J.M."/>
            <person name="Toriumi M.J."/>
            <person name="Chan M.M."/>
            <person name="Tang C.C."/>
            <person name="Onodera C.S."/>
            <person name="Deng J.M."/>
            <person name="Akiyama K."/>
            <person name="Ansari Y."/>
            <person name="Arakawa T."/>
            <person name="Banh J."/>
            <person name="Banno F."/>
            <person name="Bowser L."/>
            <person name="Brooks S.Y."/>
            <person name="Carninci P."/>
            <person name="Chao Q."/>
            <person name="Choy N."/>
            <person name="Enju A."/>
            <person name="Goldsmith A.D."/>
            <person name="Gurjal M."/>
            <person name="Hansen N.F."/>
            <person name="Hayashizaki Y."/>
            <person name="Johnson-Hopson C."/>
            <person name="Hsuan V.W."/>
            <person name="Iida K."/>
            <person name="Karnes M."/>
            <person name="Khan S."/>
            <person name="Koesema E."/>
            <person name="Ishida J."/>
            <person name="Jiang P.X."/>
            <person name="Jones T."/>
            <person name="Kawai J."/>
            <person name="Kamiya A."/>
            <person name="Meyers C."/>
            <person name="Nakajima M."/>
            <person name="Narusaka M."/>
            <person name="Seki M."/>
            <person name="Sakurai T."/>
            <person name="Satou M."/>
            <person name="Tamse R."/>
            <person name="Vaysberg M."/>
            <person name="Wallender E.K."/>
            <person name="Wong C."/>
            <person name="Yamamura Y."/>
            <person name="Yuan S."/>
            <person name="Shinozaki K."/>
            <person name="Davis R.W."/>
            <person name="Theologis A."/>
            <person name="Ecker J.R."/>
        </authorList>
    </citation>
    <scope>NUCLEOTIDE SEQUENCE [LARGE SCALE MRNA]</scope>
    <source>
        <strain>cv. Columbia</strain>
    </source>
</reference>
<reference key="6">
    <citation type="submission" date="2005-03" db="EMBL/GenBank/DDBJ databases">
        <title>Large-scale analysis of RIKEN Arabidopsis full-length (RAFL) cDNAs.</title>
        <authorList>
            <person name="Totoki Y."/>
            <person name="Seki M."/>
            <person name="Ishida J."/>
            <person name="Nakajima M."/>
            <person name="Enju A."/>
            <person name="Kamiya A."/>
            <person name="Narusaka M."/>
            <person name="Shin-i T."/>
            <person name="Nakagawa M."/>
            <person name="Sakamoto N."/>
            <person name="Oishi K."/>
            <person name="Kohara Y."/>
            <person name="Kobayashi M."/>
            <person name="Toyoda A."/>
            <person name="Sakaki Y."/>
            <person name="Sakurai T."/>
            <person name="Iida K."/>
            <person name="Akiyama K."/>
            <person name="Satou M."/>
            <person name="Toyoda T."/>
            <person name="Konagaya A."/>
            <person name="Carninci P."/>
            <person name="Kawai J."/>
            <person name="Hayashizaki Y."/>
            <person name="Shinozaki K."/>
        </authorList>
    </citation>
    <scope>NUCLEOTIDE SEQUENCE [LARGE SCALE MRNA]</scope>
    <source>
        <strain>cv. Columbia</strain>
    </source>
</reference>
<reference key="7">
    <citation type="submission" date="2009-03" db="EMBL/GenBank/DDBJ databases">
        <title>ORF cloning and analysis of Arabidopsis transcription factor genes.</title>
        <authorList>
            <person name="Fujita M."/>
            <person name="Mizukado S."/>
            <person name="Seki M."/>
            <person name="Shinozaki K."/>
            <person name="Mitsuda N."/>
            <person name="Takiguchi Y."/>
            <person name="Takagi M."/>
        </authorList>
    </citation>
    <scope>NUCLEOTIDE SEQUENCE [LARGE SCALE MRNA]</scope>
</reference>
<reference key="8">
    <citation type="journal article" date="2013" name="Dev. Biol.">
        <title>TAF13 interacts with PRC2 members and is essential for Arabidopsis seed development.</title>
        <authorList>
            <person name="Lindner M."/>
            <person name="Simonini S."/>
            <person name="Kooiker M."/>
            <person name="Gagliardini V."/>
            <person name="Somssich M."/>
            <person name="Hohenstatt M."/>
            <person name="Simon R."/>
            <person name="Grossniklaus U."/>
            <person name="Kater M.M."/>
        </authorList>
    </citation>
    <scope>FUNCTION</scope>
    <scope>INTERACTION WITH MEA AND EZA1</scope>
    <scope>DISRUPTION PHENOTYPE</scope>
    <scope>DEVELOPMENTAL STAGE</scope>
    <scope>SUBCELLULAR LOCATION</scope>
    <source>
        <strain>cv. Columbia</strain>
    </source>
</reference>
<protein>
    <recommendedName>
        <fullName>Transcription initiation factor TFIID subunit 13</fullName>
    </recommendedName>
    <alternativeName>
        <fullName>TBP-associated factor 13</fullName>
        <shortName>AtTAF13</shortName>
    </alternativeName>
</protein>
<keyword id="KW-0010">Activator</keyword>
<keyword id="KW-1003">Cell membrane</keyword>
<keyword id="KW-0472">Membrane</keyword>
<keyword id="KW-0539">Nucleus</keyword>
<keyword id="KW-1185">Reference proteome</keyword>
<keyword id="KW-0804">Transcription</keyword>
<keyword id="KW-0805">Transcription regulation</keyword>
<accession>Q6NQH4</accession>
<feature type="chain" id="PRO_0000424053" description="Transcription initiation factor TFIID subunit 13">
    <location>
        <begin position="1"/>
        <end position="126"/>
    </location>
</feature>
<feature type="domain" description="Histone-fold">
    <location>
        <begin position="30"/>
        <end position="74"/>
    </location>
</feature>
<feature type="region of interest" description="Disordered" evidence="1">
    <location>
        <begin position="1"/>
        <end position="30"/>
    </location>
</feature>
<feature type="compositionally biased region" description="Low complexity" evidence="1">
    <location>
        <begin position="1"/>
        <end position="18"/>
    </location>
</feature>